<accession>Q63053</accession>
<accession>Q62743</accession>
<proteinExistence type="evidence at protein level"/>
<comment type="function">
    <text evidence="2 6 8 9 10 12 13 15">Master regulator of synaptic plasticity that self-assembles into virion-like capsids that encapsulate RNAs and mediate intercellular RNA transfer in the nervous system (PubMed:29328916). ARC protein is released from neurons in extracellular vesicles that mediate the transfer of ARC mRNA into new target cells, where ARC mRNA can undergo activity-dependent translation (PubMed:29328916). ARC capsids are endocytosed and are able to transfer ARC mRNA into the cytoplasm of neurons (PubMed:29328916). Acts as a key regulator of synaptic plasticity: required for protein synthesis-dependent forms of long-term potentiation (LTP) and depression (LTD) and for the formation of long-term memory (PubMed:10818134, PubMed:17088211, PubMed:17088212, PubMed:17088213). Regulates synaptic plasticity by promoting endocytosis of AMPA receptors (AMPARs) in response to synaptic activity: this endocytic pathway maintains levels of surface AMPARs in response to chronic changes in neuronal activity through synaptic scaling, thereby contributing to neuronal homeostasis (PubMed:17088211, PubMed:17088212). Acts as a postsynaptic mediator of activity-dependent synapse elimination in the developing cerebellum by mediating elimination of surplus climbing fiber synapses (PubMed:23791196). Accumulates at weaker synapses, probably to prevent their undesired enhancement (PubMed:22579289). This suggests that ARC-containing virion-like capsids may be required to eliminate synaptic material (PubMed:29328916). Required to transduce experience into long-lasting changes in visual cortex plasticity and for long-term memory (PubMed:10818134). Involved in postsynaptic trafficking and processing of amyloid-beta A4 (APP) via interaction with PSEN1 (By similarity). In addition to its role in synapses, also involved in the regulation of the immune system: specifically expressed in skin-migratory dendritic cells and regulates fast dendritic cell migration, thereby regulating T-cell activation (By similarity).</text>
</comment>
<comment type="subunit">
    <text evidence="2 8 12 15 16 17">Homooligomer; homooligomerizes into virion-like capsids (PubMed:29328916, PubMed:30028513, PubMed:31080121). Interacts with SH3GL1/endophilin-2, SH3GL3/endophilin-3 and DNM2/DYN2 (PubMed:17088211). Interacts with CAMK2B (in the kinase inactive state); leading to target ARC to inactive synapses (PubMed:22579289). Interacts with PSEN1 (By similarity). Interacts with GRIN2A and GRIN2B; inhibiting homooligomerization (PubMed:31080121).</text>
</comment>
<comment type="interaction">
    <interactant intactId="EBI-5275794">
        <id>Q63053</id>
    </interactant>
    <interactant intactId="EBI-916155">
        <id>P08413</id>
        <label>Camk2b</label>
    </interactant>
    <organismsDiffer>false</organismsDiffer>
    <experiments>6</experiments>
</comment>
<comment type="interaction">
    <interactant intactId="EBI-5275794">
        <id>Q63053</id>
    </interactant>
    <interactant intactId="EBI-2606326">
        <id>PRO_0000025591</id>
        <label>PSEN1</label>
        <dbReference type="UniProtKB" id="P49768"/>
    </interactant>
    <organismsDiffer>true</organismsDiffer>
    <experiments>3</experiments>
</comment>
<comment type="subcellular location">
    <subcellularLocation>
        <location evidence="15">Extracellular vesicle membrane</location>
        <topology evidence="2">Lipid-anchor</topology>
    </subcellularLocation>
    <subcellularLocation>
        <location evidence="2">Postsynaptic cell membrane</location>
        <topology evidence="2">Lipid-anchor</topology>
    </subcellularLocation>
    <subcellularLocation>
        <location evidence="8 12">Synapse</location>
    </subcellularLocation>
    <subcellularLocation>
        <location evidence="8">Postsynaptic density</location>
    </subcellularLocation>
    <subcellularLocation>
        <location evidence="8">Early endosome membrane</location>
    </subcellularLocation>
    <subcellularLocation>
        <location evidence="19 20">Cell projection</location>
        <location evidence="19 20">Dendrite</location>
    </subcellularLocation>
    <subcellularLocation>
        <location evidence="19">Cytoplasm</location>
        <location evidence="19">Cytoskeleton</location>
    </subcellularLocation>
    <subcellularLocation>
        <location evidence="19">Cytoplasm</location>
        <location evidence="19">Cell cortex</location>
    </subcellularLocation>
    <subcellularLocation>
        <location evidence="8">Cell projection</location>
        <location evidence="8">Dendritic spine</location>
    </subcellularLocation>
    <subcellularLocation>
        <location evidence="2">Cytoplasmic vesicle</location>
        <location evidence="2">Secretory vesicle</location>
        <location evidence="2">Acrosome</location>
    </subcellularLocation>
    <subcellularLocation>
        <location evidence="1">Cytoplasmic vesicle</location>
        <location evidence="1">Clathrin-coated vesicle membrane</location>
    </subcellularLocation>
    <text evidence="1 2 8 12 15 18 19">Forms virion-like extracellular vesicles that are released from neurons (PubMed:29328916). Enriched in postsynaptic density of dendritic spines (PubMed:17088211). Targeted to inactive synapses following interaction with CAMK2B in the kinase inactive state (PubMed:22579289). Accumulation at weaker synapses may be required to prevent their undesired enhancement (PubMed:22579289). Associated with the cell cortex of neuronal soma and dendrites (PubMed:7857651). Associated with the sperm tail (By similarity).</text>
</comment>
<comment type="tissue specificity">
    <text evidence="18 19">Expressed exclusively in certain parts of the brain including cortex and molecular layer of the hippocampus. Typically expressed at high level in a minority of neurons. Basal expression higher in cortex than in hippocampus, highest in visual cortex.</text>
</comment>
<comment type="developmental stage">
    <text evidence="19">Expressed during postnatal development from day 8 (PubMed:7857651). Highest expression around day 23 with moderate levels expressed to adulthood (PubMed:7857651).</text>
</comment>
<comment type="induction">
    <text evidence="5 7 11 18 19 20">Arc expression is regulated at transcription, post-transcription and translation levels (PubMed:10570490, PubMed:11226315, PubMed:18614031, PubMed:9808461). Transcription is tightly coupled to encoding of information in neuronal circuits (PubMed:10570490). Expression is induced by neuronal and synaptic activity (PubMed:10570490, PubMed:7777577, PubMed:7857651). Induced at highest level in hippocampus within 30 minutes, dropping to basal levels within 24 hours (PubMed:7777577, PubMed:7857651). Arc transcripts are transported to dendrites and become enriched at sites of local synaptic activity where they are locally translated into protein (PubMed:18614031, PubMed:9808461). Arc transcripts resemble some viral RNAs and contain an internal ribosomal entry site (IRES) that allows cap-independent translation (PubMed:11226315).</text>
</comment>
<comment type="domain">
    <text evidence="14 15">The protein is evolutionarily related to retrotransposon Gag proteins: it contains large N- and C-terminal domains that form a bi-lobar architecture similar to the capsid domain of human immunodeficiency virus (HIV) gag protein (PubMed:25864631, PubMed:29328916). It contains structural elements found within viral Gag polyproteins originated from the Ty3/gypsy retrotransposon family and retains the ability to form virion-like capsid structures that can mediate mRNA transfer between cells (PubMed:29328916). Tetrapod and fly Arc protein-coding genes originated independently from distinct lineages of Ty3/gypsy retrotransposons (PubMed:29328916).</text>
</comment>
<comment type="PTM">
    <text evidence="2">Palmitoylation anchors the protein into the membrane by allowing direct insertion into the hydrophobic core of the lipid bilayer.</text>
</comment>
<comment type="PTM">
    <text evidence="1 2">Ubiquitinated by UBE3A, leading to its degradation by the proteasome, thereby promoting AMPA receptors (AMPARs) expression at synapses. Ubiquitinated by RNF216 at Lys-268 and Lys-269 limiting ARC protein levels induced by synaptic activity and thus regulating ARC-dependent forms of synaptic plasticity.</text>
</comment>
<comment type="PTM">
    <text evidence="2">Phosphorylation at Ser-260 by CaMK2 prevents homooligomerization into virion-like capsids by disrupting an interaction surface essential for high-order oligomerization. Phosphorylation by CaMK2 inhibits synaptic activity.</text>
</comment>
<comment type="miscellaneous">
    <text evidence="18">Transcripts enriched in dendrites may be translated locally.</text>
</comment>
<comment type="similarity">
    <text evidence="22">Belongs to the ARC/ARG3.1 family.</text>
</comment>
<dbReference type="EMBL" id="U19866">
    <property type="protein sequence ID" value="AAA68695.1"/>
    <property type="molecule type" value="mRNA"/>
</dbReference>
<dbReference type="EMBL" id="Z46925">
    <property type="protein sequence ID" value="CAA87033.1"/>
    <property type="molecule type" value="mRNA"/>
</dbReference>
<dbReference type="PIR" id="I58168">
    <property type="entry name" value="I58168"/>
</dbReference>
<dbReference type="RefSeq" id="NP_062234.2">
    <property type="nucleotide sequence ID" value="NM_019361.2"/>
</dbReference>
<dbReference type="RefSeq" id="XP_017450553.1">
    <property type="nucleotide sequence ID" value="XM_017595064.3"/>
</dbReference>
<dbReference type="PDB" id="4X3H">
    <property type="method" value="X-ray"/>
    <property type="resolution" value="2.40 A"/>
    <property type="chains" value="A=207-277"/>
</dbReference>
<dbReference type="PDB" id="4X3I">
    <property type="method" value="X-ray"/>
    <property type="resolution" value="1.80 A"/>
    <property type="chains" value="A=207-277"/>
</dbReference>
<dbReference type="PDB" id="4X3X">
    <property type="method" value="X-ray"/>
    <property type="resolution" value="2.00 A"/>
    <property type="chains" value="A=278-362"/>
</dbReference>
<dbReference type="PDB" id="6GSE">
    <property type="method" value="NMR"/>
    <property type="chains" value="A=206-364"/>
</dbReference>
<dbReference type="PDB" id="7R24">
    <property type="method" value="X-ray"/>
    <property type="resolution" value="2.70 A"/>
    <property type="chains" value="A=1-396"/>
</dbReference>
<dbReference type="PDBsum" id="4X3H"/>
<dbReference type="PDBsum" id="4X3I"/>
<dbReference type="PDBsum" id="4X3X"/>
<dbReference type="PDBsum" id="6GSE"/>
<dbReference type="PDBsum" id="7R24"/>
<dbReference type="SMR" id="Q63053"/>
<dbReference type="BioGRID" id="248539">
    <property type="interactions" value="8"/>
</dbReference>
<dbReference type="FunCoup" id="Q63053">
    <property type="interactions" value="171"/>
</dbReference>
<dbReference type="IntAct" id="Q63053">
    <property type="interactions" value="6"/>
</dbReference>
<dbReference type="STRING" id="10116.ENSRNOP00000063719"/>
<dbReference type="GlyGen" id="Q63053">
    <property type="glycosylation" value="1 site"/>
</dbReference>
<dbReference type="iPTMnet" id="Q63053"/>
<dbReference type="PhosphoSitePlus" id="Q63053"/>
<dbReference type="PaxDb" id="10116-ENSRNOP00000063719"/>
<dbReference type="Ensembl" id="ENSRNOT00000076998.3">
    <property type="protein sequence ID" value="ENSRNOP00000068090.1"/>
    <property type="gene ID" value="ENSRNOG00000043465.4"/>
</dbReference>
<dbReference type="GeneID" id="54323"/>
<dbReference type="KEGG" id="rno:54323"/>
<dbReference type="UCSC" id="RGD:62037">
    <property type="organism name" value="rat"/>
</dbReference>
<dbReference type="AGR" id="RGD:62037"/>
<dbReference type="CTD" id="23237"/>
<dbReference type="RGD" id="62037">
    <property type="gene designation" value="Arc"/>
</dbReference>
<dbReference type="eggNOG" id="ENOG502QSPT">
    <property type="taxonomic scope" value="Eukaryota"/>
</dbReference>
<dbReference type="GeneTree" id="ENSGT00390000003914"/>
<dbReference type="HOGENOM" id="CLU_782004_0_0_1"/>
<dbReference type="InParanoid" id="Q63053"/>
<dbReference type="OMA" id="NWLEFKK"/>
<dbReference type="OrthoDB" id="9867597at2759"/>
<dbReference type="PhylomeDB" id="Q63053"/>
<dbReference type="TreeFam" id="TF335604"/>
<dbReference type="EvolutionaryTrace" id="Q63053"/>
<dbReference type="PRO" id="PR:Q63053"/>
<dbReference type="Proteomes" id="UP000002494">
    <property type="component" value="Chromosome 7"/>
</dbReference>
<dbReference type="Bgee" id="ENSRNOG00000043465">
    <property type="expression patterns" value="Expressed in frontal cortex and 16 other cell types or tissues"/>
</dbReference>
<dbReference type="GO" id="GO:0001669">
    <property type="term" value="C:acrosomal vesicle"/>
    <property type="evidence" value="ECO:0007669"/>
    <property type="project" value="UniProtKB-SubCell"/>
</dbReference>
<dbReference type="GO" id="GO:0015629">
    <property type="term" value="C:actin cytoskeleton"/>
    <property type="evidence" value="ECO:0000314"/>
    <property type="project" value="RGD"/>
</dbReference>
<dbReference type="GO" id="GO:0005938">
    <property type="term" value="C:cell cortex"/>
    <property type="evidence" value="ECO:0007669"/>
    <property type="project" value="UniProtKB-SubCell"/>
</dbReference>
<dbReference type="GO" id="GO:0030665">
    <property type="term" value="C:clathrin-coated vesicle membrane"/>
    <property type="evidence" value="ECO:0007669"/>
    <property type="project" value="UniProtKB-SubCell"/>
</dbReference>
<dbReference type="GO" id="GO:0005737">
    <property type="term" value="C:cytoplasm"/>
    <property type="evidence" value="ECO:0000266"/>
    <property type="project" value="RGD"/>
</dbReference>
<dbReference type="GO" id="GO:0005829">
    <property type="term" value="C:cytosol"/>
    <property type="evidence" value="ECO:0000304"/>
    <property type="project" value="Reactome"/>
</dbReference>
<dbReference type="GO" id="GO:0030425">
    <property type="term" value="C:dendrite"/>
    <property type="evidence" value="ECO:0000266"/>
    <property type="project" value="RGD"/>
</dbReference>
<dbReference type="GO" id="GO:0043197">
    <property type="term" value="C:dendritic spine"/>
    <property type="evidence" value="ECO:0000250"/>
    <property type="project" value="UniProtKB"/>
</dbReference>
<dbReference type="GO" id="GO:0031901">
    <property type="term" value="C:early endosome membrane"/>
    <property type="evidence" value="ECO:0007669"/>
    <property type="project" value="UniProtKB-SubCell"/>
</dbReference>
<dbReference type="GO" id="GO:1903561">
    <property type="term" value="C:extracellular vesicle"/>
    <property type="evidence" value="ECO:0000314"/>
    <property type="project" value="UniProtKB"/>
</dbReference>
<dbReference type="GO" id="GO:0098978">
    <property type="term" value="C:glutamatergic synapse"/>
    <property type="evidence" value="ECO:0000314"/>
    <property type="project" value="SynGO"/>
</dbReference>
<dbReference type="GO" id="GO:0045121">
    <property type="term" value="C:membrane raft"/>
    <property type="evidence" value="ECO:0000250"/>
    <property type="project" value="UniProtKB"/>
</dbReference>
<dbReference type="GO" id="GO:0071598">
    <property type="term" value="C:neuronal ribonucleoprotein granule"/>
    <property type="evidence" value="ECO:0000266"/>
    <property type="project" value="RGD"/>
</dbReference>
<dbReference type="GO" id="GO:0005886">
    <property type="term" value="C:plasma membrane"/>
    <property type="evidence" value="ECO:0000266"/>
    <property type="project" value="RGD"/>
</dbReference>
<dbReference type="GO" id="GO:0098839">
    <property type="term" value="C:postsynaptic density membrane"/>
    <property type="evidence" value="ECO:0000314"/>
    <property type="project" value="SynGO"/>
</dbReference>
<dbReference type="GO" id="GO:0098845">
    <property type="term" value="C:postsynaptic endosome"/>
    <property type="evidence" value="ECO:0000314"/>
    <property type="project" value="SynGO"/>
</dbReference>
<dbReference type="GO" id="GO:0170047">
    <property type="term" value="C:virus-like capsid"/>
    <property type="evidence" value="ECO:0000266"/>
    <property type="project" value="RGD"/>
</dbReference>
<dbReference type="GO" id="GO:0003729">
    <property type="term" value="F:mRNA binding"/>
    <property type="evidence" value="ECO:0000314"/>
    <property type="project" value="UniProtKB"/>
</dbReference>
<dbReference type="GO" id="GO:0005198">
    <property type="term" value="F:structural molecule activity"/>
    <property type="evidence" value="ECO:0000266"/>
    <property type="project" value="RGD"/>
</dbReference>
<dbReference type="GO" id="GO:0009952">
    <property type="term" value="P:anterior/posterior pattern specification"/>
    <property type="evidence" value="ECO:0000266"/>
    <property type="project" value="RGD"/>
</dbReference>
<dbReference type="GO" id="GO:0016477">
    <property type="term" value="P:cell migration"/>
    <property type="evidence" value="ECO:0000250"/>
    <property type="project" value="UniProtKB"/>
</dbReference>
<dbReference type="GO" id="GO:0007010">
    <property type="term" value="P:cytoskeleton organization"/>
    <property type="evidence" value="ECO:0000250"/>
    <property type="project" value="UniProtKB"/>
</dbReference>
<dbReference type="GO" id="GO:0006897">
    <property type="term" value="P:endocytosis"/>
    <property type="evidence" value="ECO:0007669"/>
    <property type="project" value="UniProtKB-KW"/>
</dbReference>
<dbReference type="GO" id="GO:0007492">
    <property type="term" value="P:endoderm development"/>
    <property type="evidence" value="ECO:0000266"/>
    <property type="project" value="RGD"/>
</dbReference>
<dbReference type="GO" id="GO:0007612">
    <property type="term" value="P:learning"/>
    <property type="evidence" value="ECO:0000270"/>
    <property type="project" value="RGD"/>
</dbReference>
<dbReference type="GO" id="GO:0007616">
    <property type="term" value="P:long-term memory"/>
    <property type="evidence" value="ECO:0000315"/>
    <property type="project" value="UniProtKB"/>
</dbReference>
<dbReference type="GO" id="GO:0050804">
    <property type="term" value="P:modulation of chemical synaptic transmission"/>
    <property type="evidence" value="ECO:0000314"/>
    <property type="project" value="SynGO"/>
</dbReference>
<dbReference type="GO" id="GO:0051028">
    <property type="term" value="P:mRNA transport"/>
    <property type="evidence" value="ECO:0000314"/>
    <property type="project" value="UniProtKB"/>
</dbReference>
<dbReference type="GO" id="GO:2000969">
    <property type="term" value="P:positive regulation of AMPA receptor activity"/>
    <property type="evidence" value="ECO:0000315"/>
    <property type="project" value="CACAO"/>
</dbReference>
<dbReference type="GO" id="GO:0051260">
    <property type="term" value="P:protein homooligomerization"/>
    <property type="evidence" value="ECO:0000314"/>
    <property type="project" value="UniProtKB"/>
</dbReference>
<dbReference type="GO" id="GO:0022604">
    <property type="term" value="P:regulation of cell morphogenesis"/>
    <property type="evidence" value="ECO:0000250"/>
    <property type="project" value="UniProtKB"/>
</dbReference>
<dbReference type="GO" id="GO:0061001">
    <property type="term" value="P:regulation of dendritic spine morphogenesis"/>
    <property type="evidence" value="ECO:0000316"/>
    <property type="project" value="ARUK-UCL"/>
</dbReference>
<dbReference type="GO" id="GO:1900452">
    <property type="term" value="P:regulation of long-term synaptic depression"/>
    <property type="evidence" value="ECO:0000250"/>
    <property type="project" value="UniProtKB"/>
</dbReference>
<dbReference type="GO" id="GO:1900271">
    <property type="term" value="P:regulation of long-term synaptic potentiation"/>
    <property type="evidence" value="ECO:0000315"/>
    <property type="project" value="UniProtKB"/>
</dbReference>
<dbReference type="GO" id="GO:0048168">
    <property type="term" value="P:regulation of neuronal synaptic plasticity"/>
    <property type="evidence" value="ECO:0000270"/>
    <property type="project" value="RGD"/>
</dbReference>
<dbReference type="GO" id="GO:0099149">
    <property type="term" value="P:regulation of postsynaptic neurotransmitter receptor internalization"/>
    <property type="evidence" value="ECO:0000266"/>
    <property type="project" value="RGD"/>
</dbReference>
<dbReference type="GO" id="GO:0042220">
    <property type="term" value="P:response to cocaine"/>
    <property type="evidence" value="ECO:0000270"/>
    <property type="project" value="RGD"/>
</dbReference>
<dbReference type="GO" id="GO:0045471">
    <property type="term" value="P:response to ethanol"/>
    <property type="evidence" value="ECO:0000270"/>
    <property type="project" value="RGD"/>
</dbReference>
<dbReference type="GO" id="GO:0043278">
    <property type="term" value="P:response to morphine"/>
    <property type="evidence" value="ECO:0000270"/>
    <property type="project" value="RGD"/>
</dbReference>
<dbReference type="GO" id="GO:0110077">
    <property type="term" value="P:vesicle-mediated intercellular transport"/>
    <property type="evidence" value="ECO:0000314"/>
    <property type="project" value="UniProtKB"/>
</dbReference>
<dbReference type="InterPro" id="IPR023263">
    <property type="entry name" value="Arc"/>
</dbReference>
<dbReference type="InterPro" id="IPR040814">
    <property type="entry name" value="Arc_C"/>
</dbReference>
<dbReference type="InterPro" id="IPR048965">
    <property type="entry name" value="Arc_capsid_dom"/>
</dbReference>
<dbReference type="InterPro" id="IPR045557">
    <property type="entry name" value="Arc_N"/>
</dbReference>
<dbReference type="PANTHER" id="PTHR15962">
    <property type="entry name" value="ACTIVITY-REGULATED CYTOSKELETON-ASSOCIATED PROTEIN"/>
    <property type="match status" value="1"/>
</dbReference>
<dbReference type="PANTHER" id="PTHR15962:SF0">
    <property type="entry name" value="ACTIVITY-REGULATED CYTOSKELETON-ASSOCIATED PROTEIN"/>
    <property type="match status" value="1"/>
</dbReference>
<dbReference type="Pfam" id="PF18162">
    <property type="entry name" value="Arc_C"/>
    <property type="match status" value="1"/>
</dbReference>
<dbReference type="Pfam" id="PF21395">
    <property type="entry name" value="Arc_capsid_dom"/>
    <property type="match status" value="1"/>
</dbReference>
<dbReference type="Pfam" id="PF19284">
    <property type="entry name" value="Arc_MA"/>
    <property type="match status" value="1"/>
</dbReference>
<dbReference type="PRINTS" id="PR02027">
    <property type="entry name" value="ARCARG31"/>
</dbReference>
<keyword id="KW-0002">3D-structure</keyword>
<keyword id="KW-1003">Cell membrane</keyword>
<keyword id="KW-0966">Cell projection</keyword>
<keyword id="KW-0175">Coiled coil</keyword>
<keyword id="KW-0963">Cytoplasm</keyword>
<keyword id="KW-0968">Cytoplasmic vesicle</keyword>
<keyword id="KW-0206">Cytoskeleton</keyword>
<keyword id="KW-0217">Developmental protein</keyword>
<keyword id="KW-0254">Endocytosis</keyword>
<keyword id="KW-0967">Endosome</keyword>
<keyword id="KW-1017">Isopeptide bond</keyword>
<keyword id="KW-0449">Lipoprotein</keyword>
<keyword id="KW-0472">Membrane</keyword>
<keyword id="KW-0564">Palmitate</keyword>
<keyword id="KW-0597">Phosphoprotein</keyword>
<keyword id="KW-0628">Postsynaptic cell membrane</keyword>
<keyword id="KW-1185">Reference proteome</keyword>
<keyword id="KW-0694">RNA-binding</keyword>
<keyword id="KW-0770">Synapse</keyword>
<keyword id="KW-0813">Transport</keyword>
<keyword id="KW-0832">Ubl conjugation</keyword>
<organism>
    <name type="scientific">Rattus norvegicus</name>
    <name type="common">Rat</name>
    <dbReference type="NCBI Taxonomy" id="10116"/>
    <lineage>
        <taxon>Eukaryota</taxon>
        <taxon>Metazoa</taxon>
        <taxon>Chordata</taxon>
        <taxon>Craniata</taxon>
        <taxon>Vertebrata</taxon>
        <taxon>Euteleostomi</taxon>
        <taxon>Mammalia</taxon>
        <taxon>Eutheria</taxon>
        <taxon>Euarchontoglires</taxon>
        <taxon>Glires</taxon>
        <taxon>Rodentia</taxon>
        <taxon>Myomorpha</taxon>
        <taxon>Muroidea</taxon>
        <taxon>Muridae</taxon>
        <taxon>Murinae</taxon>
        <taxon>Rattus</taxon>
    </lineage>
</organism>
<feature type="chain" id="PRO_0000273287" description="Activity-regulated cytoskeleton-associated protein">
    <location>
        <begin position="1"/>
        <end position="396"/>
    </location>
</feature>
<feature type="region of interest" description="Interaction with SH3GL1 or SH3GL3" evidence="8">
    <location>
        <begin position="89"/>
        <end position="100"/>
    </location>
</feature>
<feature type="region of interest" description="Interaction with DNM2" evidence="8">
    <location>
        <begin position="195"/>
        <end position="214"/>
    </location>
</feature>
<feature type="region of interest" description="Disordered" evidence="4">
    <location>
        <begin position="358"/>
        <end position="396"/>
    </location>
</feature>
<feature type="coiled-coil region" evidence="3">
    <location>
        <begin position="54"/>
        <end position="78"/>
    </location>
</feature>
<feature type="compositionally biased region" description="Polar residues" evidence="4">
    <location>
        <begin position="382"/>
        <end position="396"/>
    </location>
</feature>
<feature type="modified residue" description="Phosphoserine" evidence="2">
    <location>
        <position position="260"/>
    </location>
</feature>
<feature type="modified residue" description="Phosphothreonine" evidence="2">
    <location>
        <position position="278"/>
    </location>
</feature>
<feature type="cross-link" description="Glycyl lysine isopeptide (Lys-Gly) (interchain with G-Cter in ubiquitin)" evidence="1">
    <location>
        <position position="268"/>
    </location>
</feature>
<feature type="cross-link" description="Glycyl lysine isopeptide (Lys-Gly) (interchain with G-Cter in ubiquitin)" evidence="1">
    <location>
        <position position="269"/>
    </location>
</feature>
<feature type="sequence conflict" description="In Ref. 1; AAA68695." evidence="22" ref="1">
    <original>V</original>
    <variation>L</variation>
    <location>
        <position position="209"/>
    </location>
</feature>
<feature type="helix" evidence="27">
    <location>
        <begin position="207"/>
        <end position="210"/>
    </location>
</feature>
<feature type="strand" evidence="27">
    <location>
        <begin position="211"/>
        <end position="216"/>
    </location>
</feature>
<feature type="helix" evidence="27">
    <location>
        <begin position="217"/>
        <end position="231"/>
    </location>
</feature>
<feature type="helix" evidence="27">
    <location>
        <begin position="235"/>
        <end position="239"/>
    </location>
</feature>
<feature type="helix" evidence="27">
    <location>
        <begin position="240"/>
        <end position="245"/>
    </location>
</feature>
<feature type="helix" evidence="27">
    <location>
        <begin position="249"/>
        <end position="257"/>
    </location>
</feature>
<feature type="helix" evidence="27">
    <location>
        <begin position="258"/>
        <end position="260"/>
    </location>
</feature>
<feature type="helix" evidence="27">
    <location>
        <begin position="264"/>
        <end position="276"/>
    </location>
</feature>
<feature type="helix" evidence="28">
    <location>
        <begin position="279"/>
        <end position="288"/>
    </location>
</feature>
<feature type="helix" evidence="28">
    <location>
        <begin position="298"/>
        <end position="312"/>
    </location>
</feature>
<feature type="helix" evidence="28">
    <location>
        <begin position="318"/>
        <end position="327"/>
    </location>
</feature>
<feature type="helix" evidence="28">
    <location>
        <begin position="331"/>
        <end position="337"/>
    </location>
</feature>
<feature type="turn" evidence="28">
    <location>
        <begin position="338"/>
        <end position="340"/>
    </location>
</feature>
<feature type="helix" evidence="28">
    <location>
        <begin position="345"/>
        <end position="359"/>
    </location>
</feature>
<evidence type="ECO:0000250" key="1">
    <source>
        <dbReference type="UniProtKB" id="Q7LC44"/>
    </source>
</evidence>
<evidence type="ECO:0000250" key="2">
    <source>
        <dbReference type="UniProtKB" id="Q9WV31"/>
    </source>
</evidence>
<evidence type="ECO:0000255" key="3"/>
<evidence type="ECO:0000256" key="4">
    <source>
        <dbReference type="SAM" id="MobiDB-lite"/>
    </source>
</evidence>
<evidence type="ECO:0000269" key="5">
    <source>
    </source>
</evidence>
<evidence type="ECO:0000269" key="6">
    <source>
    </source>
</evidence>
<evidence type="ECO:0000269" key="7">
    <source>
    </source>
</evidence>
<evidence type="ECO:0000269" key="8">
    <source>
    </source>
</evidence>
<evidence type="ECO:0000269" key="9">
    <source>
    </source>
</evidence>
<evidence type="ECO:0000269" key="10">
    <source>
    </source>
</evidence>
<evidence type="ECO:0000269" key="11">
    <source>
    </source>
</evidence>
<evidence type="ECO:0000269" key="12">
    <source>
    </source>
</evidence>
<evidence type="ECO:0000269" key="13">
    <source>
    </source>
</evidence>
<evidence type="ECO:0000269" key="14">
    <source>
    </source>
</evidence>
<evidence type="ECO:0000269" key="15">
    <source>
    </source>
</evidence>
<evidence type="ECO:0000269" key="16">
    <source>
    </source>
</evidence>
<evidence type="ECO:0000269" key="17">
    <source>
    </source>
</evidence>
<evidence type="ECO:0000269" key="18">
    <source>
    </source>
</evidence>
<evidence type="ECO:0000269" key="19">
    <source>
    </source>
</evidence>
<evidence type="ECO:0000269" key="20">
    <source>
    </source>
</evidence>
<evidence type="ECO:0000303" key="21">
    <source>
    </source>
</evidence>
<evidence type="ECO:0000305" key="22"/>
<evidence type="ECO:0000312" key="23">
    <source>
        <dbReference type="RGD" id="62037"/>
    </source>
</evidence>
<evidence type="ECO:0007744" key="24">
    <source>
        <dbReference type="PDB" id="4X3H"/>
    </source>
</evidence>
<evidence type="ECO:0007744" key="25">
    <source>
        <dbReference type="PDB" id="4X3I"/>
    </source>
</evidence>
<evidence type="ECO:0007744" key="26">
    <source>
        <dbReference type="PDB" id="4X3X"/>
    </source>
</evidence>
<evidence type="ECO:0007829" key="27">
    <source>
        <dbReference type="PDB" id="4X3I"/>
    </source>
</evidence>
<evidence type="ECO:0007829" key="28">
    <source>
        <dbReference type="PDB" id="4X3X"/>
    </source>
</evidence>
<name>ARC_RAT</name>
<gene>
    <name evidence="21 23" type="primary">Arc</name>
</gene>
<protein>
    <recommendedName>
        <fullName evidence="21">Activity-regulated cytoskeleton-associated protein</fullName>
    </recommendedName>
    <alternativeName>
        <fullName evidence="2">Activity-regulated gene 3.1 protein</fullName>
        <shortName evidence="2">ARC/ARG3.1</shortName>
        <shortName evidence="2">Arg3.1</shortName>
    </alternativeName>
</protein>
<sequence>MELDHMTTGGLHAYPAPRGGPAAKPNVILQIGKCRAEMLEHVRRTHRHLLTEVSKQVERELKGLHRSVGKLENNLDGYVPTGDSQRWKKSIKACLCRCQETIANLERWVKREMHVWREVFYRLERWADRLESMGGKYPVGSEPARHTVSVGVGGPEPYCQEADGYDYTVSPYAITPPPAAGELPEQESVGAQQYQSWVPGEDGQPSPGVDTQIFEDPREFLSHLEEYLRQVGGSEEYWLSQIQNHMNGPAKKWWEFKQGSVKNWVEFKKEFLQYSEGTLSREAIQRELDLPQKQGEPLDQFLWRKRDLYQTLYVDAEEEEIIQYVVGTLQPKFKRFLRHPLPKTLEQLIQRGMEVQDGLEQAAEPSVTPLPTEDETEALTPALTSESVASDRTQPE</sequence>
<reference key="1">
    <citation type="journal article" date="1995" name="Neuron">
        <title>Arc, a growth factor and activity-regulated gene, encodes a novel cytoskeleton-associated protein that is enriched in neuronal dendrites.</title>
        <authorList>
            <person name="Lyford G.L."/>
            <person name="Yamagata K."/>
            <person name="Kaufmann W.E."/>
            <person name="Barnes C.A."/>
            <person name="Sanders L.K."/>
            <person name="Copeland N.G."/>
            <person name="Gilbert D.J."/>
            <person name="Jenkins N.A."/>
            <person name="Lanahan A.A."/>
            <person name="Worley P.F."/>
        </authorList>
    </citation>
    <scope>NUCLEOTIDE SEQUENCE [MRNA]</scope>
    <scope>SUBCELLULAR LOCATION</scope>
    <scope>TISSUE SPECIFICITY</scope>
    <scope>DEVELOPMENTAL STAGE</scope>
    <scope>INDUCTION</scope>
    <source>
        <tissue>Hippocampus</tissue>
    </source>
</reference>
<reference key="2">
    <citation type="journal article" date="1995" name="Proc. Natl. Acad. Sci. U.S.A.">
        <title>Somatodendritic expression of an immediate early gene is regulated by synaptic activity.</title>
        <authorList>
            <person name="Link W."/>
            <person name="Konietzko U."/>
            <person name="Kauselmann G."/>
            <person name="Krug M."/>
            <person name="Schwanke B."/>
            <person name="Frey U."/>
            <person name="Kuhl D."/>
        </authorList>
    </citation>
    <scope>NUCLEOTIDE SEQUENCE [MRNA]</scope>
    <scope>TISSUE SPECIFICITY</scope>
    <scope>INDUCTION</scope>
    <source>
        <strain>Sprague-Dawley</strain>
        <tissue>Hippocampus</tissue>
    </source>
</reference>
<reference key="3">
    <citation type="journal article" date="1998" name="Neuron">
        <title>Synaptic activation causes the mRNA for the IEG Arc to localize selectively near activated postsynaptic sites on dendrites.</title>
        <authorList>
            <person name="Steward O."/>
            <person name="Wallace C.S."/>
            <person name="Lyford G.L."/>
            <person name="Worley P.F."/>
        </authorList>
    </citation>
    <scope>SUBCELLULAR LOCATION</scope>
    <scope>INDUCTION</scope>
</reference>
<reference key="4">
    <citation type="journal article" date="1999" name="Nat. Neurosci.">
        <title>Environment-specific expression of the immediate-early gene Arc in hippocampal neuronal ensembles.</title>
        <authorList>
            <person name="Guzowski J.F."/>
            <person name="McNaughton B.L."/>
            <person name="Barnes C.A."/>
            <person name="Worley P.F."/>
        </authorList>
    </citation>
    <scope>INDUCTION</scope>
</reference>
<reference key="5">
    <citation type="journal article" date="2000" name="J. Neurosci.">
        <title>Inhibition of activity-dependent arc protein expression in the rat hippocampus impairs the maintenance of long-term potentiation and the consolidation of long-term memory.</title>
        <authorList>
            <person name="Guzowski J.F."/>
            <person name="Lyford G.L."/>
            <person name="Stevenson G.D."/>
            <person name="Houston F.P."/>
            <person name="McGaugh J.L."/>
            <person name="Worley P.F."/>
            <person name="Barnes C.A."/>
        </authorList>
    </citation>
    <scope>FUNCTION</scope>
</reference>
<reference key="6">
    <citation type="journal article" date="2001" name="Proc. Natl. Acad. Sci. U.S.A.">
        <title>Internal initiation of translation of five dendritically localized neuronal mRNAs.</title>
        <authorList>
            <person name="Pinkstaff J.K."/>
            <person name="Chappell S.A."/>
            <person name="Mauro V.P."/>
            <person name="Edelman G.M."/>
            <person name="Krushel L.A."/>
        </authorList>
    </citation>
    <scope>INDUCTION</scope>
</reference>
<reference key="7">
    <citation type="journal article" date="2006" name="Neuron">
        <title>Arc/Arg3.1 interacts with the endocytic machinery to regulate AMPA receptor trafficking.</title>
        <authorList>
            <person name="Chowdhury S."/>
            <person name="Shepherd J.D."/>
            <person name="Okuno H."/>
            <person name="Lyford G."/>
            <person name="Petralia R.S."/>
            <person name="Plath N."/>
            <person name="Kuhl D."/>
            <person name="Huganir R.L."/>
            <person name="Worley P.F."/>
        </authorList>
    </citation>
    <scope>FUNCTION</scope>
    <scope>SUBCELLULAR LOCATION</scope>
    <scope>INTERACTION WITH DNM2; SH3GL1 AND SH3GL3</scope>
</reference>
<reference key="8">
    <citation type="journal article" date="2006" name="Neuron">
        <title>Increased expression of the immediate-early gene arc/arg3.1 reduces AMPA receptor-mediated synaptic transmission.</title>
        <authorList>
            <person name="Rial Verde E.M."/>
            <person name="Lee-Osbourne J."/>
            <person name="Worley P.F."/>
            <person name="Malinow R."/>
            <person name="Cline H.T."/>
        </authorList>
    </citation>
    <scope>FUNCTION</scope>
</reference>
<reference key="9">
    <citation type="journal article" date="2006" name="Neuron">
        <title>Arc/Arg3.1 mediates homeostatic synaptic scaling of AMPA Receptors.</title>
        <authorList>
            <person name="Shepherd J.D."/>
            <person name="Rumbaugh G."/>
            <person name="Wu J."/>
            <person name="Chowdhury S."/>
            <person name="Plath N."/>
            <person name="Kuhl D."/>
            <person name="Huganir R.L."/>
            <person name="Worley P.F."/>
        </authorList>
    </citation>
    <scope>FUNCTION</scope>
</reference>
<reference key="10">
    <citation type="journal article" date="2008" name="Neuron">
        <title>Rapid translation of Arc/Arg3.1 selectively mediates mGluR-dependent LTD through persistent increases in AMPAR endocytosis rate.</title>
        <authorList>
            <person name="Waung M.W."/>
            <person name="Pfeiffer B.E."/>
            <person name="Nosyreva E.D."/>
            <person name="Ronesi J.A."/>
            <person name="Huber K.M."/>
        </authorList>
    </citation>
    <scope>INDUCTION</scope>
</reference>
<reference key="11">
    <citation type="journal article" date="2012" name="Cell">
        <title>Inverse synaptic tagging of inactive synapses via dynamic interaction of Arc/Arg3.1 with CaMKIIbeta.</title>
        <authorList>
            <person name="Okuno H."/>
            <person name="Akashi K."/>
            <person name="Ishii Y."/>
            <person name="Yagishita-Kyo N."/>
            <person name="Suzuki K."/>
            <person name="Nonaka M."/>
            <person name="Kawashima T."/>
            <person name="Fujii H."/>
            <person name="Takemoto-Kimura S."/>
            <person name="Abe M."/>
            <person name="Natsume R."/>
            <person name="Chowdhury S."/>
            <person name="Sakimura K."/>
            <person name="Worley P.F."/>
            <person name="Bito H."/>
        </authorList>
    </citation>
    <scope>FUNCTION</scope>
    <scope>SUBCELLULAR LOCATION</scope>
    <scope>INTERACTION WITH CAMK2B</scope>
</reference>
<reference key="12">
    <citation type="journal article" date="2013" name="Neuron">
        <title>Arc/Arg3.1 is a postsynaptic mediator of activity-dependent synapse elimination in the developing cerebellum.</title>
        <authorList>
            <person name="Mikuni T."/>
            <person name="Uesaka N."/>
            <person name="Okuno H."/>
            <person name="Hirai H."/>
            <person name="Deisseroth K."/>
            <person name="Bito H."/>
            <person name="Kano M."/>
        </authorList>
    </citation>
    <scope>FUNCTION</scope>
</reference>
<reference key="13">
    <citation type="journal article" date="2018" name="Cell">
        <title>The neuronal gene Arc encodes a repurposed retrotransposon Gag protein that mediates intercellular RNA transfer.</title>
        <authorList>
            <person name="Pastuzyn E.D."/>
            <person name="Day C.E."/>
            <person name="Kearns R.B."/>
            <person name="Kyrke-Smith M."/>
            <person name="Taibi A.V."/>
            <person name="McCormick J."/>
            <person name="Yoder N."/>
            <person name="Belnap D.M."/>
            <person name="Erlendsson S."/>
            <person name="Morado D.R."/>
            <person name="Briggs J.A.G."/>
            <person name="Feschotte C."/>
            <person name="Shepherd J.D."/>
        </authorList>
    </citation>
    <scope>FUNCTION</scope>
    <scope>SUBCELLULAR LOCATION</scope>
    <scope>SUBUNIT</scope>
    <scope>RNA-BINDING</scope>
</reference>
<reference key="14">
    <citation type="journal article" date="2018" name="J. Neurochem.">
        <title>Structure of monomeric full-length ARC sheds light on molecular flexibility, protein interactions, and functional modalities.</title>
        <authorList>
            <person name="Hallin E.I."/>
            <person name="Eriksen M.S."/>
            <person name="Baryshnikov S."/>
            <person name="Nikolaienko O."/>
            <person name="Groedem S."/>
            <person name="Hosokawa T."/>
            <person name="Hayashi Y."/>
            <person name="Bramham C.R."/>
            <person name="Kursula P."/>
        </authorList>
    </citation>
    <scope>SUBUNIT</scope>
</reference>
<reference evidence="24 25 26" key="15">
    <citation type="journal article" date="2015" name="Neuron">
        <title>Structural basis of arc binding to synaptic proteins: implications for cognitive disease.</title>
        <authorList>
            <person name="Zhang W."/>
            <person name="Wu J."/>
            <person name="Ward M.D."/>
            <person name="Yang S."/>
            <person name="Chuang Y.A."/>
            <person name="Xiao M."/>
            <person name="Li R."/>
            <person name="Leahy D.J."/>
            <person name="Worley P.F."/>
        </authorList>
    </citation>
    <scope>X-RAY CRYSTALLOGRAPHY (1.80 ANGSTROMS) OF 207-277</scope>
    <scope>DOMAIN</scope>
</reference>
<reference key="16">
    <citation type="journal article" date="2019" name="Structure">
        <title>The capsid domain of Arc changes its oligomerization propensity through direct interaction with the NMDA receptor.</title>
        <authorList>
            <person name="Nielsen L.D."/>
            <person name="Pedersen C.P."/>
            <person name="Erlendsson S."/>
            <person name="Teilum K."/>
        </authorList>
    </citation>
    <scope>STRUCTURE BY NMR OF 206-364</scope>
    <scope>SUBUNIT</scope>
    <scope>INTERACTION WITH GRIN2A AND GRIN2B</scope>
</reference>